<name>PRMA_BACVZ</name>
<proteinExistence type="inferred from homology"/>
<organism>
    <name type="scientific">Bacillus velezensis (strain DSM 23117 / BGSC 10A6 / LMG 26770 / FZB42)</name>
    <name type="common">Bacillus amyloliquefaciens subsp. plantarum</name>
    <dbReference type="NCBI Taxonomy" id="326423"/>
    <lineage>
        <taxon>Bacteria</taxon>
        <taxon>Bacillati</taxon>
        <taxon>Bacillota</taxon>
        <taxon>Bacilli</taxon>
        <taxon>Bacillales</taxon>
        <taxon>Bacillaceae</taxon>
        <taxon>Bacillus</taxon>
        <taxon>Bacillus amyloliquefaciens group</taxon>
    </lineage>
</organism>
<dbReference type="EC" id="2.1.1.-" evidence="1"/>
<dbReference type="EMBL" id="CP000560">
    <property type="protein sequence ID" value="ABS74735.1"/>
    <property type="molecule type" value="Genomic_DNA"/>
</dbReference>
<dbReference type="RefSeq" id="WP_012118021.1">
    <property type="nucleotide sequence ID" value="NC_009725.2"/>
</dbReference>
<dbReference type="SMR" id="A7Z6V9"/>
<dbReference type="GeneID" id="93081513"/>
<dbReference type="KEGG" id="bay:RBAM_023750"/>
<dbReference type="HOGENOM" id="CLU_049382_0_1_9"/>
<dbReference type="Proteomes" id="UP000001120">
    <property type="component" value="Chromosome"/>
</dbReference>
<dbReference type="GO" id="GO:0005737">
    <property type="term" value="C:cytoplasm"/>
    <property type="evidence" value="ECO:0007669"/>
    <property type="project" value="UniProtKB-SubCell"/>
</dbReference>
<dbReference type="GO" id="GO:0016279">
    <property type="term" value="F:protein-lysine N-methyltransferase activity"/>
    <property type="evidence" value="ECO:0007669"/>
    <property type="project" value="RHEA"/>
</dbReference>
<dbReference type="GO" id="GO:0032259">
    <property type="term" value="P:methylation"/>
    <property type="evidence" value="ECO:0007669"/>
    <property type="project" value="UniProtKB-KW"/>
</dbReference>
<dbReference type="CDD" id="cd02440">
    <property type="entry name" value="AdoMet_MTases"/>
    <property type="match status" value="1"/>
</dbReference>
<dbReference type="Gene3D" id="3.40.50.150">
    <property type="entry name" value="Vaccinia Virus protein VP39"/>
    <property type="match status" value="1"/>
</dbReference>
<dbReference type="HAMAP" id="MF_00735">
    <property type="entry name" value="Methyltr_PrmA"/>
    <property type="match status" value="1"/>
</dbReference>
<dbReference type="InterPro" id="IPR050078">
    <property type="entry name" value="Ribosomal_L11_MeTrfase_PrmA"/>
</dbReference>
<dbReference type="InterPro" id="IPR004498">
    <property type="entry name" value="Ribosomal_PrmA_MeTrfase"/>
</dbReference>
<dbReference type="InterPro" id="IPR029063">
    <property type="entry name" value="SAM-dependent_MTases_sf"/>
</dbReference>
<dbReference type="NCBIfam" id="TIGR00406">
    <property type="entry name" value="prmA"/>
    <property type="match status" value="1"/>
</dbReference>
<dbReference type="PANTHER" id="PTHR43648">
    <property type="entry name" value="ELECTRON TRANSFER FLAVOPROTEIN BETA SUBUNIT LYSINE METHYLTRANSFERASE"/>
    <property type="match status" value="1"/>
</dbReference>
<dbReference type="PANTHER" id="PTHR43648:SF1">
    <property type="entry name" value="ELECTRON TRANSFER FLAVOPROTEIN BETA SUBUNIT LYSINE METHYLTRANSFERASE"/>
    <property type="match status" value="1"/>
</dbReference>
<dbReference type="Pfam" id="PF06325">
    <property type="entry name" value="PrmA"/>
    <property type="match status" value="1"/>
</dbReference>
<dbReference type="PIRSF" id="PIRSF000401">
    <property type="entry name" value="RPL11_MTase"/>
    <property type="match status" value="1"/>
</dbReference>
<dbReference type="SUPFAM" id="SSF53335">
    <property type="entry name" value="S-adenosyl-L-methionine-dependent methyltransferases"/>
    <property type="match status" value="1"/>
</dbReference>
<sequence>MKWSEISIHTTHEAVEPISNILHEAGASGVVIEDPLDLMKERENVYGEIYQLDPNDYPDEGVIVKAYLPINSFLGETVDGIKETINNLLLYDIDLGRNTITISEVNEEEWATAWKKYYHPVKISEKFTIVPTWETYTPVHTDELIIEMDPGMAFGTGTHPTTVLCIQALERIVQKGDRVIDVGTGSGILSIAAAMLEAESVHAYDLDPVAVESARLNVKLNKVSDTAEVKQNNLLDGITGEHDVIVANILAEVILRFTSQAYDLLKDGGHFITSGIIGQKKQEVKEALEKAGFTIIEILSMEDWVSIIAKK</sequence>
<evidence type="ECO:0000255" key="1">
    <source>
        <dbReference type="HAMAP-Rule" id="MF_00735"/>
    </source>
</evidence>
<accession>A7Z6V9</accession>
<reference key="1">
    <citation type="journal article" date="2007" name="Nat. Biotechnol.">
        <title>Comparative analysis of the complete genome sequence of the plant growth-promoting bacterium Bacillus amyloliquefaciens FZB42.</title>
        <authorList>
            <person name="Chen X.H."/>
            <person name="Koumoutsi A."/>
            <person name="Scholz R."/>
            <person name="Eisenreich A."/>
            <person name="Schneider K."/>
            <person name="Heinemeyer I."/>
            <person name="Morgenstern B."/>
            <person name="Voss B."/>
            <person name="Hess W.R."/>
            <person name="Reva O."/>
            <person name="Junge H."/>
            <person name="Voigt B."/>
            <person name="Jungblut P.R."/>
            <person name="Vater J."/>
            <person name="Suessmuth R."/>
            <person name="Liesegang H."/>
            <person name="Strittmatter A."/>
            <person name="Gottschalk G."/>
            <person name="Borriss R."/>
        </authorList>
    </citation>
    <scope>NUCLEOTIDE SEQUENCE [LARGE SCALE GENOMIC DNA]</scope>
    <source>
        <strain>DSM 23117 / BGSC 10A6 / LMG 26770 / FZB42</strain>
    </source>
</reference>
<protein>
    <recommendedName>
        <fullName evidence="1">Ribosomal protein L11 methyltransferase</fullName>
        <shortName evidence="1">L11 Mtase</shortName>
        <ecNumber evidence="1">2.1.1.-</ecNumber>
    </recommendedName>
</protein>
<comment type="function">
    <text evidence="1">Methylates ribosomal protein L11.</text>
</comment>
<comment type="catalytic activity">
    <reaction evidence="1">
        <text>L-lysyl-[protein] + 3 S-adenosyl-L-methionine = N(6),N(6),N(6)-trimethyl-L-lysyl-[protein] + 3 S-adenosyl-L-homocysteine + 3 H(+)</text>
        <dbReference type="Rhea" id="RHEA:54192"/>
        <dbReference type="Rhea" id="RHEA-COMP:9752"/>
        <dbReference type="Rhea" id="RHEA-COMP:13826"/>
        <dbReference type="ChEBI" id="CHEBI:15378"/>
        <dbReference type="ChEBI" id="CHEBI:29969"/>
        <dbReference type="ChEBI" id="CHEBI:57856"/>
        <dbReference type="ChEBI" id="CHEBI:59789"/>
        <dbReference type="ChEBI" id="CHEBI:61961"/>
    </reaction>
</comment>
<comment type="subcellular location">
    <subcellularLocation>
        <location evidence="1">Cytoplasm</location>
    </subcellularLocation>
</comment>
<comment type="similarity">
    <text evidence="1">Belongs to the methyltransferase superfamily. PrmA family.</text>
</comment>
<keyword id="KW-0963">Cytoplasm</keyword>
<keyword id="KW-0489">Methyltransferase</keyword>
<keyword id="KW-0949">S-adenosyl-L-methionine</keyword>
<keyword id="KW-0808">Transferase</keyword>
<gene>
    <name evidence="1" type="primary">prmA</name>
    <name type="ordered locus">RBAM_023750</name>
</gene>
<feature type="chain" id="PRO_1000045983" description="Ribosomal protein L11 methyltransferase">
    <location>
        <begin position="1"/>
        <end position="311"/>
    </location>
</feature>
<feature type="binding site" evidence="1">
    <location>
        <position position="162"/>
    </location>
    <ligand>
        <name>S-adenosyl-L-methionine</name>
        <dbReference type="ChEBI" id="CHEBI:59789"/>
    </ligand>
</feature>
<feature type="binding site" evidence="1">
    <location>
        <position position="183"/>
    </location>
    <ligand>
        <name>S-adenosyl-L-methionine</name>
        <dbReference type="ChEBI" id="CHEBI:59789"/>
    </ligand>
</feature>
<feature type="binding site" evidence="1">
    <location>
        <position position="205"/>
    </location>
    <ligand>
        <name>S-adenosyl-L-methionine</name>
        <dbReference type="ChEBI" id="CHEBI:59789"/>
    </ligand>
</feature>
<feature type="binding site" evidence="1">
    <location>
        <position position="248"/>
    </location>
    <ligand>
        <name>S-adenosyl-L-methionine</name>
        <dbReference type="ChEBI" id="CHEBI:59789"/>
    </ligand>
</feature>